<reference key="1">
    <citation type="journal article" date="2004" name="Mol. Biol. Evol.">
        <title>The chloroplast genome of Nymphaea alba: whole-genome analyses and the problem of identifying the most basal angiosperm.</title>
        <authorList>
            <person name="Goremykin V.V."/>
            <person name="Hirsch-Ernst K.I."/>
            <person name="Woelfl S."/>
            <person name="Hellwig F.H."/>
        </authorList>
    </citation>
    <scope>NUCLEOTIDE SEQUENCE [LARGE SCALE GENOMIC DNA]</scope>
</reference>
<name>PSBA_NYMAL</name>
<accession>Q6EW68</accession>
<feature type="initiator methionine" description="Removed" evidence="1">
    <location>
        <position position="1"/>
    </location>
</feature>
<feature type="chain" id="PRO_0000340030" description="Photosystem II protein D1" evidence="1">
    <location>
        <begin position="2"/>
        <end position="344"/>
    </location>
</feature>
<feature type="propeptide" id="PRO_0000340031" evidence="1">
    <location>
        <begin position="345"/>
        <end position="353"/>
    </location>
</feature>
<feature type="transmembrane region" description="Helical" evidence="1">
    <location>
        <begin position="29"/>
        <end position="46"/>
    </location>
</feature>
<feature type="transmembrane region" description="Helical" evidence="1">
    <location>
        <begin position="118"/>
        <end position="133"/>
    </location>
</feature>
<feature type="transmembrane region" description="Helical" evidence="1">
    <location>
        <begin position="142"/>
        <end position="156"/>
    </location>
</feature>
<feature type="transmembrane region" description="Helical" evidence="1">
    <location>
        <begin position="197"/>
        <end position="218"/>
    </location>
</feature>
<feature type="transmembrane region" description="Helical" evidence="1">
    <location>
        <begin position="274"/>
        <end position="288"/>
    </location>
</feature>
<feature type="binding site" description="axial binding residue" evidence="1">
    <location>
        <position position="118"/>
    </location>
    <ligand>
        <name>chlorophyll a</name>
        <dbReference type="ChEBI" id="CHEBI:58416"/>
        <label>ChlzD1</label>
    </ligand>
    <ligandPart>
        <name>Mg</name>
        <dbReference type="ChEBI" id="CHEBI:25107"/>
    </ligandPart>
</feature>
<feature type="binding site" evidence="1">
    <location>
        <position position="126"/>
    </location>
    <ligand>
        <name>pheophytin a</name>
        <dbReference type="ChEBI" id="CHEBI:136840"/>
        <label>D1</label>
    </ligand>
</feature>
<feature type="binding site" evidence="1">
    <location>
        <position position="170"/>
    </location>
    <ligand>
        <name>[CaMn4O5] cluster</name>
        <dbReference type="ChEBI" id="CHEBI:189552"/>
    </ligand>
</feature>
<feature type="binding site" evidence="1">
    <location>
        <position position="189"/>
    </location>
    <ligand>
        <name>[CaMn4O5] cluster</name>
        <dbReference type="ChEBI" id="CHEBI:189552"/>
    </ligand>
</feature>
<feature type="binding site" description="axial binding residue" evidence="1">
    <location>
        <position position="198"/>
    </location>
    <ligand>
        <name>chlorophyll a</name>
        <dbReference type="ChEBI" id="CHEBI:58416"/>
        <label>PD1</label>
    </ligand>
    <ligandPart>
        <name>Mg</name>
        <dbReference type="ChEBI" id="CHEBI:25107"/>
    </ligandPart>
</feature>
<feature type="binding site" evidence="1">
    <location>
        <position position="215"/>
    </location>
    <ligand>
        <name>a quinone</name>
        <dbReference type="ChEBI" id="CHEBI:132124"/>
        <label>B</label>
    </ligand>
</feature>
<feature type="binding site" evidence="1">
    <location>
        <position position="215"/>
    </location>
    <ligand>
        <name>Fe cation</name>
        <dbReference type="ChEBI" id="CHEBI:24875"/>
        <note>ligand shared with heterodimeric partner</note>
    </ligand>
</feature>
<feature type="binding site" evidence="1">
    <location>
        <begin position="264"/>
        <end position="265"/>
    </location>
    <ligand>
        <name>a quinone</name>
        <dbReference type="ChEBI" id="CHEBI:132124"/>
        <label>B</label>
    </ligand>
</feature>
<feature type="binding site" evidence="1">
    <location>
        <position position="272"/>
    </location>
    <ligand>
        <name>Fe cation</name>
        <dbReference type="ChEBI" id="CHEBI:24875"/>
        <note>ligand shared with heterodimeric partner</note>
    </ligand>
</feature>
<feature type="binding site" evidence="1">
    <location>
        <position position="332"/>
    </location>
    <ligand>
        <name>[CaMn4O5] cluster</name>
        <dbReference type="ChEBI" id="CHEBI:189552"/>
    </ligand>
</feature>
<feature type="binding site" evidence="1">
    <location>
        <position position="333"/>
    </location>
    <ligand>
        <name>[CaMn4O5] cluster</name>
        <dbReference type="ChEBI" id="CHEBI:189552"/>
    </ligand>
</feature>
<feature type="binding site" evidence="1">
    <location>
        <position position="342"/>
    </location>
    <ligand>
        <name>[CaMn4O5] cluster</name>
        <dbReference type="ChEBI" id="CHEBI:189552"/>
    </ligand>
</feature>
<feature type="binding site" evidence="1">
    <location>
        <position position="344"/>
    </location>
    <ligand>
        <name>[CaMn4O5] cluster</name>
        <dbReference type="ChEBI" id="CHEBI:189552"/>
    </ligand>
</feature>
<feature type="site" description="Tyrosine radical intermediate" evidence="1">
    <location>
        <position position="161"/>
    </location>
</feature>
<feature type="site" description="Stabilizes free radical intermediate" evidence="1">
    <location>
        <position position="190"/>
    </location>
</feature>
<feature type="site" description="Cleavage; by CTPA" evidence="1">
    <location>
        <begin position="344"/>
        <end position="345"/>
    </location>
</feature>
<feature type="modified residue" description="N-acetylthreonine" evidence="1">
    <location>
        <position position="2"/>
    </location>
</feature>
<feature type="modified residue" description="Phosphothreonine" evidence="1">
    <location>
        <position position="2"/>
    </location>
</feature>
<geneLocation type="chloroplast"/>
<gene>
    <name evidence="1" type="primary">psbA</name>
</gene>
<proteinExistence type="inferred from homology"/>
<evidence type="ECO:0000255" key="1">
    <source>
        <dbReference type="HAMAP-Rule" id="MF_01379"/>
    </source>
</evidence>
<sequence>MTAILERRESTSLWGRFCNWVTSTENRLYIGWFGVLMIPTLLTATSVFIIAFIAAPPVDIDGIREPVSGSLLYGNNIISGAIVPTSAAIGLHFYPIWEASSVDEWLYNGGPYELIVLHFLLGVACYMGREWELSFRLGMRPWIAVAYSAPVAAATAVFLIYPIGQGSFSDGMPLGISGTFNFMIVFQAEHNILMHPFHMLGVAGVFGGSLFSAMHGSLVTSSLIRETTENESANEGYRFGQEEETYNIVAAHGYFGRLIFQYASFNNSRSLHFFLAAWPVVGIWFTALGISTMAFNLNGFNFNQSVVDSQGRVINTWADIINRANLGMEVMHERNAHNFPLDLAAVEAPSTNG</sequence>
<dbReference type="EC" id="1.10.3.9" evidence="1"/>
<dbReference type="EMBL" id="AJ627251">
    <property type="protein sequence ID" value="CAF28573.1"/>
    <property type="molecule type" value="Genomic_DNA"/>
</dbReference>
<dbReference type="RefSeq" id="YP_053135.1">
    <property type="nucleotide sequence ID" value="NC_006050.1"/>
</dbReference>
<dbReference type="SMR" id="Q6EW68"/>
<dbReference type="GeneID" id="2896140"/>
<dbReference type="GO" id="GO:0009535">
    <property type="term" value="C:chloroplast thylakoid membrane"/>
    <property type="evidence" value="ECO:0007669"/>
    <property type="project" value="UniProtKB-SubCell"/>
</dbReference>
<dbReference type="GO" id="GO:0009523">
    <property type="term" value="C:photosystem II"/>
    <property type="evidence" value="ECO:0007669"/>
    <property type="project" value="UniProtKB-KW"/>
</dbReference>
<dbReference type="GO" id="GO:0016168">
    <property type="term" value="F:chlorophyll binding"/>
    <property type="evidence" value="ECO:0007669"/>
    <property type="project" value="UniProtKB-UniRule"/>
</dbReference>
<dbReference type="GO" id="GO:0045156">
    <property type="term" value="F:electron transporter, transferring electrons within the cyclic electron transport pathway of photosynthesis activity"/>
    <property type="evidence" value="ECO:0007669"/>
    <property type="project" value="InterPro"/>
</dbReference>
<dbReference type="GO" id="GO:0005506">
    <property type="term" value="F:iron ion binding"/>
    <property type="evidence" value="ECO:0007669"/>
    <property type="project" value="UniProtKB-UniRule"/>
</dbReference>
<dbReference type="GO" id="GO:0016682">
    <property type="term" value="F:oxidoreductase activity, acting on diphenols and related substances as donors, oxygen as acceptor"/>
    <property type="evidence" value="ECO:0007669"/>
    <property type="project" value="UniProtKB-UniRule"/>
</dbReference>
<dbReference type="GO" id="GO:0010242">
    <property type="term" value="F:oxygen evolving activity"/>
    <property type="evidence" value="ECO:0007669"/>
    <property type="project" value="UniProtKB-EC"/>
</dbReference>
<dbReference type="GO" id="GO:0009772">
    <property type="term" value="P:photosynthetic electron transport in photosystem II"/>
    <property type="evidence" value="ECO:0007669"/>
    <property type="project" value="InterPro"/>
</dbReference>
<dbReference type="GO" id="GO:0009635">
    <property type="term" value="P:response to herbicide"/>
    <property type="evidence" value="ECO:0007669"/>
    <property type="project" value="UniProtKB-KW"/>
</dbReference>
<dbReference type="CDD" id="cd09289">
    <property type="entry name" value="Photosystem-II_D1"/>
    <property type="match status" value="1"/>
</dbReference>
<dbReference type="FunFam" id="1.20.85.10:FF:000002">
    <property type="entry name" value="Photosystem II protein D1"/>
    <property type="match status" value="1"/>
</dbReference>
<dbReference type="Gene3D" id="1.20.85.10">
    <property type="entry name" value="Photosystem II protein D1-like"/>
    <property type="match status" value="1"/>
</dbReference>
<dbReference type="HAMAP" id="MF_01379">
    <property type="entry name" value="PSII_PsbA_D1"/>
    <property type="match status" value="1"/>
</dbReference>
<dbReference type="InterPro" id="IPR055266">
    <property type="entry name" value="D1/D2"/>
</dbReference>
<dbReference type="InterPro" id="IPR036854">
    <property type="entry name" value="Photo_II_D1/D2_sf"/>
</dbReference>
<dbReference type="InterPro" id="IPR000484">
    <property type="entry name" value="Photo_RC_L/M"/>
</dbReference>
<dbReference type="InterPro" id="IPR055265">
    <property type="entry name" value="Photo_RC_L/M_CS"/>
</dbReference>
<dbReference type="InterPro" id="IPR005867">
    <property type="entry name" value="PSII_D1"/>
</dbReference>
<dbReference type="NCBIfam" id="TIGR01151">
    <property type="entry name" value="psbA"/>
    <property type="match status" value="1"/>
</dbReference>
<dbReference type="PANTHER" id="PTHR33149:SF12">
    <property type="entry name" value="PHOTOSYSTEM II D2 PROTEIN"/>
    <property type="match status" value="1"/>
</dbReference>
<dbReference type="PANTHER" id="PTHR33149">
    <property type="entry name" value="PHOTOSYSTEM II PROTEIN D1"/>
    <property type="match status" value="1"/>
</dbReference>
<dbReference type="Pfam" id="PF00124">
    <property type="entry name" value="Photo_RC"/>
    <property type="match status" value="1"/>
</dbReference>
<dbReference type="PRINTS" id="PR00256">
    <property type="entry name" value="REACTNCENTRE"/>
</dbReference>
<dbReference type="SUPFAM" id="SSF81483">
    <property type="entry name" value="Bacterial photosystem II reaction centre, L and M subunits"/>
    <property type="match status" value="1"/>
</dbReference>
<dbReference type="PROSITE" id="PS00244">
    <property type="entry name" value="REACTION_CENTER"/>
    <property type="match status" value="1"/>
</dbReference>
<comment type="function">
    <text evidence="1">Photosystem II (PSII) is a light-driven water:plastoquinone oxidoreductase that uses light energy to abstract electrons from H(2)O, generating O(2) and a proton gradient subsequently used for ATP formation. It consists of a core antenna complex that captures photons, and an electron transfer chain that converts photonic excitation into a charge separation. The D1/D2 (PsbA/PsbD) reaction center heterodimer binds P680, the primary electron donor of PSII as well as several subsequent electron acceptors.</text>
</comment>
<comment type="catalytic activity">
    <reaction evidence="1">
        <text>2 a plastoquinone + 4 hnu + 2 H2O = 2 a plastoquinol + O2</text>
        <dbReference type="Rhea" id="RHEA:36359"/>
        <dbReference type="Rhea" id="RHEA-COMP:9561"/>
        <dbReference type="Rhea" id="RHEA-COMP:9562"/>
        <dbReference type="ChEBI" id="CHEBI:15377"/>
        <dbReference type="ChEBI" id="CHEBI:15379"/>
        <dbReference type="ChEBI" id="CHEBI:17757"/>
        <dbReference type="ChEBI" id="CHEBI:30212"/>
        <dbReference type="ChEBI" id="CHEBI:62192"/>
        <dbReference type="EC" id="1.10.3.9"/>
    </reaction>
</comment>
<comment type="cofactor">
    <text evidence="1">The D1/D2 heterodimer binds P680, chlorophylls that are the primary electron donor of PSII, and subsequent electron acceptors. It shares a non-heme iron and each subunit binds pheophytin, quinone, additional chlorophylls, carotenoids and lipids. D1 provides most of the ligands for the Mn4-Ca-O5 cluster of the oxygen-evolving complex (OEC). There is also a Cl(-1) ion associated with D1 and D2, which is required for oxygen evolution. The PSII complex binds additional chlorophylls, carotenoids and specific lipids.</text>
</comment>
<comment type="subunit">
    <text evidence="1">PSII is composed of 1 copy each of membrane proteins PsbA, PsbB, PsbC, PsbD, PsbE, PsbF, PsbH, PsbI, PsbJ, PsbK, PsbL, PsbM, PsbT, PsbX, PsbY, PsbZ, Psb30/Ycf12, at least 3 peripheral proteins of the oxygen-evolving complex and a large number of cofactors. It forms dimeric complexes.</text>
</comment>
<comment type="subcellular location">
    <subcellularLocation>
        <location evidence="1">Plastid</location>
        <location evidence="1">Chloroplast thylakoid membrane</location>
        <topology evidence="1">Multi-pass membrane protein</topology>
    </subcellularLocation>
</comment>
<comment type="PTM">
    <text evidence="1">Tyr-161 forms a radical intermediate that is referred to as redox-active TyrZ, YZ or Y-Z.</text>
</comment>
<comment type="PTM">
    <text evidence="1">C-terminally processed by CTPA; processing is essential to allow assembly of the oxygen-evolving complex and thus photosynthetic growth.</text>
</comment>
<comment type="miscellaneous">
    <text evidence="1">2 of the reaction center chlorophylls (ChlD1 and ChlD2) are entirely coordinated by water.</text>
</comment>
<comment type="miscellaneous">
    <text evidence="1">Herbicides such as atrazine, BNT, diuron or ioxynil bind in the Q(B) binding site and block subsequent electron transfer.</text>
</comment>
<comment type="similarity">
    <text evidence="1">Belongs to the reaction center PufL/M/PsbA/D family.</text>
</comment>
<protein>
    <recommendedName>
        <fullName evidence="1">Photosystem II protein D1</fullName>
        <shortName evidence="1">PSII D1 protein</shortName>
        <ecNumber evidence="1">1.10.3.9</ecNumber>
    </recommendedName>
    <alternativeName>
        <fullName evidence="1">Photosystem II Q(B) protein</fullName>
    </alternativeName>
</protein>
<organism>
    <name type="scientific">Nymphaea alba</name>
    <name type="common">White water-lily</name>
    <name type="synonym">Castalia alba</name>
    <dbReference type="NCBI Taxonomy" id="34301"/>
    <lineage>
        <taxon>Eukaryota</taxon>
        <taxon>Viridiplantae</taxon>
        <taxon>Streptophyta</taxon>
        <taxon>Embryophyta</taxon>
        <taxon>Tracheophyta</taxon>
        <taxon>Spermatophyta</taxon>
        <taxon>Magnoliopsida</taxon>
        <taxon>Nymphaeales</taxon>
        <taxon>Nymphaeaceae</taxon>
        <taxon>Nymphaea</taxon>
    </lineage>
</organism>
<keyword id="KW-0007">Acetylation</keyword>
<keyword id="KW-0106">Calcium</keyword>
<keyword id="KW-0148">Chlorophyll</keyword>
<keyword id="KW-0150">Chloroplast</keyword>
<keyword id="KW-0157">Chromophore</keyword>
<keyword id="KW-0249">Electron transport</keyword>
<keyword id="KW-0359">Herbicide resistance</keyword>
<keyword id="KW-0408">Iron</keyword>
<keyword id="KW-0460">Magnesium</keyword>
<keyword id="KW-0464">Manganese</keyword>
<keyword id="KW-0472">Membrane</keyword>
<keyword id="KW-0479">Metal-binding</keyword>
<keyword id="KW-0560">Oxidoreductase</keyword>
<keyword id="KW-0597">Phosphoprotein</keyword>
<keyword id="KW-0602">Photosynthesis</keyword>
<keyword id="KW-0604">Photosystem II</keyword>
<keyword id="KW-0934">Plastid</keyword>
<keyword id="KW-0793">Thylakoid</keyword>
<keyword id="KW-0812">Transmembrane</keyword>
<keyword id="KW-1133">Transmembrane helix</keyword>
<keyword id="KW-0813">Transport</keyword>